<proteinExistence type="inferred from homology"/>
<keyword id="KW-0687">Ribonucleoprotein</keyword>
<keyword id="KW-0689">Ribosomal protein</keyword>
<keyword id="KW-0694">RNA-binding</keyword>
<keyword id="KW-0699">rRNA-binding</keyword>
<gene>
    <name evidence="1" type="primary">rplU</name>
    <name type="ordered locus">BCG9842_B0672</name>
</gene>
<dbReference type="EMBL" id="CP001186">
    <property type="protein sequence ID" value="ACK97565.1"/>
    <property type="molecule type" value="Genomic_DNA"/>
</dbReference>
<dbReference type="RefSeq" id="WP_000270907.1">
    <property type="nucleotide sequence ID" value="NC_011772.1"/>
</dbReference>
<dbReference type="SMR" id="B7IIV6"/>
<dbReference type="GeneID" id="93006656"/>
<dbReference type="KEGG" id="bcg:BCG9842_B0672"/>
<dbReference type="HOGENOM" id="CLU_061463_3_2_9"/>
<dbReference type="Proteomes" id="UP000006744">
    <property type="component" value="Chromosome"/>
</dbReference>
<dbReference type="GO" id="GO:0005737">
    <property type="term" value="C:cytoplasm"/>
    <property type="evidence" value="ECO:0007669"/>
    <property type="project" value="UniProtKB-ARBA"/>
</dbReference>
<dbReference type="GO" id="GO:1990904">
    <property type="term" value="C:ribonucleoprotein complex"/>
    <property type="evidence" value="ECO:0007669"/>
    <property type="project" value="UniProtKB-KW"/>
</dbReference>
<dbReference type="GO" id="GO:0005840">
    <property type="term" value="C:ribosome"/>
    <property type="evidence" value="ECO:0007669"/>
    <property type="project" value="UniProtKB-KW"/>
</dbReference>
<dbReference type="GO" id="GO:0019843">
    <property type="term" value="F:rRNA binding"/>
    <property type="evidence" value="ECO:0007669"/>
    <property type="project" value="UniProtKB-UniRule"/>
</dbReference>
<dbReference type="GO" id="GO:0003735">
    <property type="term" value="F:structural constituent of ribosome"/>
    <property type="evidence" value="ECO:0007669"/>
    <property type="project" value="InterPro"/>
</dbReference>
<dbReference type="GO" id="GO:0006412">
    <property type="term" value="P:translation"/>
    <property type="evidence" value="ECO:0007669"/>
    <property type="project" value="UniProtKB-UniRule"/>
</dbReference>
<dbReference type="HAMAP" id="MF_01363">
    <property type="entry name" value="Ribosomal_bL21"/>
    <property type="match status" value="1"/>
</dbReference>
<dbReference type="InterPro" id="IPR028909">
    <property type="entry name" value="bL21-like"/>
</dbReference>
<dbReference type="InterPro" id="IPR036164">
    <property type="entry name" value="bL21-like_sf"/>
</dbReference>
<dbReference type="InterPro" id="IPR001787">
    <property type="entry name" value="Ribosomal_bL21"/>
</dbReference>
<dbReference type="InterPro" id="IPR018258">
    <property type="entry name" value="Ribosomal_bL21_CS"/>
</dbReference>
<dbReference type="NCBIfam" id="TIGR00061">
    <property type="entry name" value="L21"/>
    <property type="match status" value="1"/>
</dbReference>
<dbReference type="PANTHER" id="PTHR21349">
    <property type="entry name" value="50S RIBOSOMAL PROTEIN L21"/>
    <property type="match status" value="1"/>
</dbReference>
<dbReference type="PANTHER" id="PTHR21349:SF0">
    <property type="entry name" value="LARGE RIBOSOMAL SUBUNIT PROTEIN BL21M"/>
    <property type="match status" value="1"/>
</dbReference>
<dbReference type="Pfam" id="PF00829">
    <property type="entry name" value="Ribosomal_L21p"/>
    <property type="match status" value="1"/>
</dbReference>
<dbReference type="SUPFAM" id="SSF141091">
    <property type="entry name" value="L21p-like"/>
    <property type="match status" value="1"/>
</dbReference>
<dbReference type="PROSITE" id="PS01169">
    <property type="entry name" value="RIBOSOMAL_L21"/>
    <property type="match status" value="1"/>
</dbReference>
<evidence type="ECO:0000255" key="1">
    <source>
        <dbReference type="HAMAP-Rule" id="MF_01363"/>
    </source>
</evidence>
<evidence type="ECO:0000305" key="2"/>
<feature type="chain" id="PRO_1000143754" description="Large ribosomal subunit protein bL21">
    <location>
        <begin position="1"/>
        <end position="102"/>
    </location>
</feature>
<organism>
    <name type="scientific">Bacillus cereus (strain G9842)</name>
    <dbReference type="NCBI Taxonomy" id="405531"/>
    <lineage>
        <taxon>Bacteria</taxon>
        <taxon>Bacillati</taxon>
        <taxon>Bacillota</taxon>
        <taxon>Bacilli</taxon>
        <taxon>Bacillales</taxon>
        <taxon>Bacillaceae</taxon>
        <taxon>Bacillus</taxon>
        <taxon>Bacillus cereus group</taxon>
    </lineage>
</organism>
<name>RL21_BACC2</name>
<comment type="function">
    <text evidence="1">This protein binds to 23S rRNA in the presence of protein L20.</text>
</comment>
<comment type="subunit">
    <text evidence="1">Part of the 50S ribosomal subunit. Contacts protein L20.</text>
</comment>
<comment type="similarity">
    <text evidence="1">Belongs to the bacterial ribosomal protein bL21 family.</text>
</comment>
<protein>
    <recommendedName>
        <fullName evidence="1">Large ribosomal subunit protein bL21</fullName>
    </recommendedName>
    <alternativeName>
        <fullName evidence="2">50S ribosomal protein L21</fullName>
    </alternativeName>
</protein>
<sequence>MYAIIETGGKQIKVEAGQAIYIEKLDVEAGETVTFDKVLFVGGENVKVGSPVVEGATVTAKVEKQGRAKKIIVFKYKAKKNNRKKQGHRQPYTKLVVEAINA</sequence>
<reference key="1">
    <citation type="submission" date="2008-10" db="EMBL/GenBank/DDBJ databases">
        <title>Genome sequence of Bacillus cereus G9842.</title>
        <authorList>
            <person name="Dodson R.J."/>
            <person name="Durkin A.S."/>
            <person name="Rosovitz M.J."/>
            <person name="Rasko D.A."/>
            <person name="Hoffmaster A."/>
            <person name="Ravel J."/>
            <person name="Sutton G."/>
        </authorList>
    </citation>
    <scope>NUCLEOTIDE SEQUENCE [LARGE SCALE GENOMIC DNA]</scope>
    <source>
        <strain>G9842</strain>
    </source>
</reference>
<accession>B7IIV6</accession>